<accession>P85288</accession>
<keyword id="KW-0007">Acetylation</keyword>
<keyword id="KW-0067">ATP-binding</keyword>
<keyword id="KW-0131">Cell cycle</keyword>
<keyword id="KW-0966">Cell projection</keyword>
<keyword id="KW-0963">Cytoplasm</keyword>
<keyword id="KW-0903">Direct protein sequencing</keyword>
<keyword id="KW-0418">Kinase</keyword>
<keyword id="KW-0460">Magnesium</keyword>
<keyword id="KW-0479">Metal-binding</keyword>
<keyword id="KW-0546">Nucleotide metabolism</keyword>
<keyword id="KW-0547">Nucleotide-binding</keyword>
<keyword id="KW-0539">Nucleus</keyword>
<keyword id="KW-0597">Phosphoprotein</keyword>
<keyword id="KW-0808">Transferase</keyword>
<feature type="chain" id="PRO_0000306184" description="Nucleoside diphosphate kinase B">
    <location>
        <begin position="1"/>
        <end position="128"/>
    </location>
</feature>
<feature type="active site" description="Pros-phosphohistidine intermediate" evidence="1 4">
    <location>
        <position position="94"/>
    </location>
</feature>
<feature type="binding site" evidence="1">
    <location>
        <position position="9"/>
    </location>
    <ligand>
        <name>ATP</name>
        <dbReference type="ChEBI" id="CHEBI:30616"/>
    </ligand>
</feature>
<feature type="binding site" evidence="1">
    <location>
        <position position="39"/>
    </location>
    <ligand>
        <name>ATP</name>
        <dbReference type="ChEBI" id="CHEBI:30616"/>
    </ligand>
</feature>
<feature type="binding site" evidence="1">
    <location>
        <position position="70"/>
    </location>
    <ligand>
        <name>ATP</name>
        <dbReference type="ChEBI" id="CHEBI:30616"/>
    </ligand>
</feature>
<feature type="binding site" evidence="1">
    <location>
        <position position="81"/>
    </location>
    <ligand>
        <name>ATP</name>
        <dbReference type="ChEBI" id="CHEBI:30616"/>
    </ligand>
</feature>
<feature type="binding site" evidence="1">
    <location>
        <position position="91"/>
    </location>
    <ligand>
        <name>ATP</name>
        <dbReference type="ChEBI" id="CHEBI:30616"/>
    </ligand>
</feature>
<feature type="modified residue" description="N-acetylmethionine" evidence="5">
    <location>
        <position position="1"/>
    </location>
</feature>
<feature type="non-consecutive residues" evidence="6">
    <location>
        <begin position="23"/>
        <end position="24"/>
    </location>
</feature>
<feature type="non-consecutive residues" evidence="6">
    <location>
        <begin position="27"/>
        <end position="28"/>
    </location>
</feature>
<feature type="non-consecutive residues" evidence="6">
    <location>
        <begin position="29"/>
        <end position="30"/>
    </location>
</feature>
<feature type="non-consecutive residues" evidence="6">
    <location>
        <begin position="64"/>
        <end position="65"/>
    </location>
</feature>
<proteinExistence type="evidence at protein level"/>
<dbReference type="EC" id="2.7.4.6"/>
<dbReference type="SMR" id="P85288"/>
<dbReference type="iPTMnet" id="P85288"/>
<dbReference type="BRENDA" id="2.7.4.6">
    <property type="organism ID" value="10455"/>
</dbReference>
<dbReference type="GO" id="GO:0005737">
    <property type="term" value="C:cytoplasm"/>
    <property type="evidence" value="ECO:0007669"/>
    <property type="project" value="UniProtKB-SubCell"/>
</dbReference>
<dbReference type="GO" id="GO:0030027">
    <property type="term" value="C:lamellipodium"/>
    <property type="evidence" value="ECO:0007669"/>
    <property type="project" value="UniProtKB-SubCell"/>
</dbReference>
<dbReference type="GO" id="GO:0005634">
    <property type="term" value="C:nucleus"/>
    <property type="evidence" value="ECO:0007669"/>
    <property type="project" value="UniProtKB-SubCell"/>
</dbReference>
<dbReference type="GO" id="GO:0001726">
    <property type="term" value="C:ruffle"/>
    <property type="evidence" value="ECO:0007669"/>
    <property type="project" value="UniProtKB-SubCell"/>
</dbReference>
<dbReference type="GO" id="GO:0005524">
    <property type="term" value="F:ATP binding"/>
    <property type="evidence" value="ECO:0007669"/>
    <property type="project" value="UniProtKB-KW"/>
</dbReference>
<dbReference type="GO" id="GO:0046872">
    <property type="term" value="F:metal ion binding"/>
    <property type="evidence" value="ECO:0007669"/>
    <property type="project" value="UniProtKB-KW"/>
</dbReference>
<dbReference type="GO" id="GO:0004550">
    <property type="term" value="F:nucleoside diphosphate kinase activity"/>
    <property type="evidence" value="ECO:0007669"/>
    <property type="project" value="UniProtKB-EC"/>
</dbReference>
<dbReference type="GO" id="GO:0009117">
    <property type="term" value="P:nucleotide metabolic process"/>
    <property type="evidence" value="ECO:0007669"/>
    <property type="project" value="UniProtKB-KW"/>
</dbReference>
<dbReference type="CDD" id="cd04413">
    <property type="entry name" value="NDPk_I"/>
    <property type="match status" value="1"/>
</dbReference>
<dbReference type="FunFam" id="3.30.70.141:FF:000039">
    <property type="entry name" value="Nucleoside diphosphate kinase B"/>
    <property type="match status" value="1"/>
</dbReference>
<dbReference type="Gene3D" id="3.30.70.141">
    <property type="entry name" value="Nucleoside diphosphate kinase-like domain"/>
    <property type="match status" value="1"/>
</dbReference>
<dbReference type="InterPro" id="IPR034907">
    <property type="entry name" value="NDK-like_dom"/>
</dbReference>
<dbReference type="InterPro" id="IPR036850">
    <property type="entry name" value="NDK-like_dom_sf"/>
</dbReference>
<dbReference type="PANTHER" id="PTHR11349">
    <property type="entry name" value="NUCLEOSIDE DIPHOSPHATE KINASE"/>
    <property type="match status" value="1"/>
</dbReference>
<dbReference type="Pfam" id="PF00334">
    <property type="entry name" value="NDK"/>
    <property type="match status" value="1"/>
</dbReference>
<dbReference type="SMART" id="SM00562">
    <property type="entry name" value="NDK"/>
    <property type="match status" value="1"/>
</dbReference>
<dbReference type="SUPFAM" id="SSF54919">
    <property type="entry name" value="Nucleoside diphosphate kinase, NDK"/>
    <property type="match status" value="1"/>
</dbReference>
<dbReference type="PROSITE" id="PS51374">
    <property type="entry name" value="NDPK_LIKE"/>
    <property type="match status" value="1"/>
</dbReference>
<organism>
    <name type="scientific">Merluccius australis australis</name>
    <name type="common">Austral hake</name>
    <dbReference type="NCBI Taxonomy" id="307686"/>
    <lineage>
        <taxon>Eukaryota</taxon>
        <taxon>Metazoa</taxon>
        <taxon>Chordata</taxon>
        <taxon>Craniata</taxon>
        <taxon>Vertebrata</taxon>
        <taxon>Euteleostomi</taxon>
        <taxon>Actinopterygii</taxon>
        <taxon>Neopterygii</taxon>
        <taxon>Teleostei</taxon>
        <taxon>Neoteleostei</taxon>
        <taxon>Acanthomorphata</taxon>
        <taxon>Zeiogadaria</taxon>
        <taxon>Gadariae</taxon>
        <taxon>Gadiformes</taxon>
        <taxon>Gadoidei</taxon>
        <taxon>Merlucciidae</taxon>
        <taxon>Merluccius</taxon>
    </lineage>
</organism>
<comment type="function">
    <text evidence="1">Major role in the synthesis of nucleoside triphosphates other than ATP.</text>
</comment>
<comment type="catalytic activity">
    <reaction evidence="1 4">
        <text>a 2'-deoxyribonucleoside 5'-diphosphate + ATP = a 2'-deoxyribonucleoside 5'-triphosphate + ADP</text>
        <dbReference type="Rhea" id="RHEA:44640"/>
        <dbReference type="ChEBI" id="CHEBI:30616"/>
        <dbReference type="ChEBI" id="CHEBI:61560"/>
        <dbReference type="ChEBI" id="CHEBI:73316"/>
        <dbReference type="ChEBI" id="CHEBI:456216"/>
        <dbReference type="EC" id="2.7.4.6"/>
    </reaction>
</comment>
<comment type="catalytic activity">
    <reaction evidence="1 4">
        <text>a ribonucleoside 5'-diphosphate + ATP = a ribonucleoside 5'-triphosphate + ADP</text>
        <dbReference type="Rhea" id="RHEA:18113"/>
        <dbReference type="ChEBI" id="CHEBI:30616"/>
        <dbReference type="ChEBI" id="CHEBI:57930"/>
        <dbReference type="ChEBI" id="CHEBI:61557"/>
        <dbReference type="ChEBI" id="CHEBI:456216"/>
        <dbReference type="EC" id="2.7.4.6"/>
    </reaction>
</comment>
<comment type="cofactor">
    <cofactor evidence="1">
        <name>Mg(2+)</name>
        <dbReference type="ChEBI" id="CHEBI:18420"/>
    </cofactor>
</comment>
<comment type="subcellular location">
    <subcellularLocation>
        <location evidence="2">Cytoplasm</location>
    </subcellularLocation>
    <subcellularLocation>
        <location evidence="2">Nucleus</location>
    </subcellularLocation>
    <subcellularLocation>
        <location evidence="2">Cell projection</location>
        <location evidence="2">Lamellipodium</location>
    </subcellularLocation>
    <subcellularLocation>
        <location evidence="2">Cell projection</location>
        <location evidence="2">Ruffle</location>
    </subcellularLocation>
</comment>
<comment type="similarity">
    <text evidence="3">Belongs to the NDK family.</text>
</comment>
<sequence>MEQTFVAIKPDGVQRGLCGEVMKFIQPMKHYLDLKDMPFYAGLCKYMSSGPVFAMVWEGEGIVKMMLGETNPADSKPGSIRGDFCINIGRNIIHGSDTVENAKMEVGLWFKPEEFVAYAEKAKAWVYE</sequence>
<protein>
    <recommendedName>
        <fullName>Nucleoside diphosphate kinase B</fullName>
        <shortName>NDK B</shortName>
        <shortName>NDP kinase B</shortName>
        <ecNumber>2.7.4.6</ecNumber>
    </recommendedName>
</protein>
<gene>
    <name type="primary">nme2</name>
</gene>
<name>NDKB_MERAA</name>
<evidence type="ECO:0000250" key="1">
    <source>
        <dbReference type="UniProtKB" id="P15531"/>
    </source>
</evidence>
<evidence type="ECO:0000250" key="2">
    <source>
        <dbReference type="UniProtKB" id="P22392"/>
    </source>
</evidence>
<evidence type="ECO:0000255" key="3"/>
<evidence type="ECO:0000255" key="4">
    <source>
        <dbReference type="PROSITE-ProRule" id="PRU10030"/>
    </source>
</evidence>
<evidence type="ECO:0000269" key="5">
    <source>
    </source>
</evidence>
<evidence type="ECO:0000303" key="6">
    <source>
    </source>
</evidence>
<evidence type="ECO:0000305" key="7"/>
<reference evidence="7" key="1">
    <citation type="journal article" date="2007" name="J. Proteome Res.">
        <title>De novo mass spectrometry sequencing and characterization of species-specific peptides from nucleoside diphosphate kinase B for the classification of commercial fish species belonging to the family Merlucciidae.</title>
        <authorList>
            <person name="Carrera M."/>
            <person name="Canas B."/>
            <person name="Pineiro C."/>
            <person name="Vazquez J."/>
            <person name="Gallardo J.M."/>
        </authorList>
    </citation>
    <scope>PROTEIN SEQUENCE</scope>
    <scope>ACETYLATION AT MET-1</scope>
    <source>
        <tissue evidence="5">White muscle</tissue>
    </source>
</reference>